<organism>
    <name type="scientific">Mus musculus</name>
    <name type="common">Mouse</name>
    <dbReference type="NCBI Taxonomy" id="10090"/>
    <lineage>
        <taxon>Eukaryota</taxon>
        <taxon>Metazoa</taxon>
        <taxon>Chordata</taxon>
        <taxon>Craniata</taxon>
        <taxon>Vertebrata</taxon>
        <taxon>Euteleostomi</taxon>
        <taxon>Mammalia</taxon>
        <taxon>Eutheria</taxon>
        <taxon>Euarchontoglires</taxon>
        <taxon>Glires</taxon>
        <taxon>Rodentia</taxon>
        <taxon>Myomorpha</taxon>
        <taxon>Muroidea</taxon>
        <taxon>Muridae</taxon>
        <taxon>Murinae</taxon>
        <taxon>Mus</taxon>
        <taxon>Mus</taxon>
    </lineage>
</organism>
<keyword id="KW-1003">Cell membrane</keyword>
<keyword id="KW-0325">Glycoprotein</keyword>
<keyword id="KW-0472">Membrane</keyword>
<keyword id="KW-1185">Reference proteome</keyword>
<keyword id="KW-0812">Transmembrane</keyword>
<keyword id="KW-1133">Transmembrane helix</keyword>
<reference key="1">
    <citation type="journal article" date="2000" name="Genome Res.">
        <title>Chromosome evolution: the junction of mammalian chromosomes in the formation of mouse chromosome 10.</title>
        <authorList>
            <person name="Pletcher M.T."/>
            <person name="Roe B.A."/>
            <person name="Chen F."/>
            <person name="Do T."/>
            <person name="Do A."/>
            <person name="Malaj E."/>
            <person name="Reeves R.H."/>
        </authorList>
    </citation>
    <scope>NUCLEOTIDE SEQUENCE [MRNA]</scope>
    <source>
        <strain>129/Sv</strain>
    </source>
</reference>
<reference key="2">
    <citation type="journal article" date="2009" name="PLoS Biol.">
        <title>Lineage-specific biology revealed by a finished genome assembly of the mouse.</title>
        <authorList>
            <person name="Church D.M."/>
            <person name="Goodstadt L."/>
            <person name="Hillier L.W."/>
            <person name="Zody M.C."/>
            <person name="Goldstein S."/>
            <person name="She X."/>
            <person name="Bult C.J."/>
            <person name="Agarwala R."/>
            <person name="Cherry J.L."/>
            <person name="DiCuccio M."/>
            <person name="Hlavina W."/>
            <person name="Kapustin Y."/>
            <person name="Meric P."/>
            <person name="Maglott D."/>
            <person name="Birtle Z."/>
            <person name="Marques A.C."/>
            <person name="Graves T."/>
            <person name="Zhou S."/>
            <person name="Teague B."/>
            <person name="Potamousis K."/>
            <person name="Churas C."/>
            <person name="Place M."/>
            <person name="Herschleb J."/>
            <person name="Runnheim R."/>
            <person name="Forrest D."/>
            <person name="Amos-Landgraf J."/>
            <person name="Schwartz D.C."/>
            <person name="Cheng Z."/>
            <person name="Lindblad-Toh K."/>
            <person name="Eichler E.E."/>
            <person name="Ponting C.P."/>
        </authorList>
    </citation>
    <scope>NUCLEOTIDE SEQUENCE [LARGE SCALE GENOMIC DNA]</scope>
    <source>
        <strain>C57BL/6J</strain>
    </source>
</reference>
<reference key="3">
    <citation type="journal article" date="2003" name="Kidney Int.">
        <title>Mouse kidney expresses mRNA of four highly related sodium-glucose cotransporters: regulation by cadmium.</title>
        <authorList>
            <person name="Tabatabai N.M."/>
            <person name="Blumenthal S.S."/>
            <person name="Lewand D.L."/>
            <person name="Petering D.H."/>
        </authorList>
    </citation>
    <scope>NUCLEOTIDE SEQUENCE [MRNA] OF 451-656</scope>
    <scope>TISSUE SPECIFICITY</scope>
    <source>
        <strain>C57BL/6J</strain>
        <tissue>Kidney</tissue>
    </source>
</reference>
<reference key="4">
    <citation type="journal article" date="2012" name="Am. J. Physiol.">
        <title>Mouse SGLT3a generates proton-activated currents but does not transport sugar.</title>
        <authorList>
            <person name="Barcelona S."/>
            <person name="Menegaz D."/>
            <person name="Diez-Sampedro A."/>
        </authorList>
    </citation>
    <scope>FUNCTION</scope>
    <scope>LACK OF SUGAR TRANSPORT ACTIVITY</scope>
    <scope>ACTIVITY REGULATION</scope>
    <scope>TISSUE SPECIFICITY</scope>
    <scope>MUTAGENESIS OF GLU-457</scope>
</reference>
<protein>
    <recommendedName>
        <fullName evidence="9">Solute carrier family 5 member 4A</fullName>
        <shortName evidence="5">SGLT3-a</shortName>
    </recommendedName>
</protein>
<sequence>MASTASVSTSTASSELSSLSNNINNAADISVIVIYFVVVMAVGVWAMLKTNRSTVGGFFLAGRSMTWWPMGASLFASNIGSGHFVGLAGTGAASGIAVTAFESHSFALLLVLGWIFVPIYIKAGVMTMPEYLKKRFGGKRLQIYLSILFLFICVILTISADIFSGAIFIKLALGLNLYLAILILLAITAIFTITGGLASVIYTDTVQAVIMLVGSFILMVFAFVEVGGYESFTEKFMNAIPSVVEGDNLTINSRCYTPQPDSFHIFRDPVTGDIPWPGTAFGMPITALWYWCINQVIVQRCLCGKNLSHVKAACILCGYLKLLPLFFMVMPGMISRILYTDMVACVVPSECVKHCGVDVGCTNYAYPMLVLKLMPMGLRGLMLSVMLASLMSSLTSVFNSASTLFTIDLYTKIRKKASERELLIAGRLFVSVLIVTSILWVPIVEVSQGGQLVHYTEAISSYLGPPIAAVFLVAVFCKRANEQGAFWGLMVGLVMGLIRMIAEFSYGTGSCLAPSSCPKIICGVHYLYFAIILFFVCILVILGVSYLTKPIPDVHLHRLCWALRNSKEERIDLDAEDKEENGADDRTEEDQTEKPRGCLKKTCDLFCGLQRAEFKLTKVEEEALTDTTEKPFWRTVMNVNVILLLAVAAFFYGYFA</sequence>
<evidence type="ECO:0000255" key="1"/>
<evidence type="ECO:0000256" key="2">
    <source>
        <dbReference type="SAM" id="MobiDB-lite"/>
    </source>
</evidence>
<evidence type="ECO:0000269" key="3">
    <source>
    </source>
</evidence>
<evidence type="ECO:0000269" key="4">
    <source>
    </source>
</evidence>
<evidence type="ECO:0000303" key="5">
    <source>
    </source>
</evidence>
<evidence type="ECO:0000303" key="6">
    <source>
    </source>
</evidence>
<evidence type="ECO:0000305" key="7"/>
<evidence type="ECO:0000305" key="8">
    <source>
    </source>
</evidence>
<evidence type="ECO:0000312" key="9">
    <source>
        <dbReference type="MGI" id="MGI:1927848"/>
    </source>
</evidence>
<gene>
    <name evidence="9" type="primary">Slc5a4a</name>
    <name evidence="6" type="synonym">Sglt3a</name>
</gene>
<comment type="function">
    <text evidence="4">Does not function as sodium/D-glucose symporter (PubMed:22301059). Generates D-glucose-induced depolarization in a pH-dependent manner, with activity in acidic conditions (pH 5) but not neutral conditions (PubMed:22301059).</text>
</comment>
<comment type="activity regulation">
    <text evidence="4">Not inhibited by phlorizin.</text>
</comment>
<comment type="subcellular location">
    <subcellularLocation>
        <location evidence="8">Cell membrane</location>
        <topology evidence="1">Multi-pass membrane protein</topology>
    </subcellularLocation>
</comment>
<comment type="tissue specificity">
    <text evidence="3 4">Expressed in small intestine (PubMed:22301059). Expressed in kidney (PubMed:12969150).</text>
</comment>
<comment type="similarity">
    <text evidence="7">Belongs to the sodium:solute symporter (SSF) (TC 2.A.21) family.</text>
</comment>
<proteinExistence type="evidence at protein level"/>
<dbReference type="EMBL" id="AF251267">
    <property type="protein sequence ID" value="AAG01741.1"/>
    <property type="molecule type" value="mRNA"/>
</dbReference>
<dbReference type="EMBL" id="AC140851">
    <property type="status" value="NOT_ANNOTATED_CDS"/>
    <property type="molecule type" value="Genomic_DNA"/>
</dbReference>
<dbReference type="EMBL" id="AF498304">
    <property type="protein sequence ID" value="AAM18100.1"/>
    <property type="molecule type" value="mRNA"/>
</dbReference>
<dbReference type="CCDS" id="CCDS35941.1"/>
<dbReference type="RefSeq" id="NP_573447.2">
    <property type="nucleotide sequence ID" value="NM_133184.2"/>
</dbReference>
<dbReference type="SMR" id="Q9ET37"/>
<dbReference type="FunCoup" id="Q9ET37">
    <property type="interactions" value="71"/>
</dbReference>
<dbReference type="STRING" id="10090.ENSMUSP00000020450"/>
<dbReference type="GlyCosmos" id="Q9ET37">
    <property type="glycosylation" value="1 site, No reported glycans"/>
</dbReference>
<dbReference type="GlyGen" id="Q9ET37">
    <property type="glycosylation" value="1 site"/>
</dbReference>
<dbReference type="iPTMnet" id="Q9ET37"/>
<dbReference type="PhosphoSitePlus" id="Q9ET37"/>
<dbReference type="PaxDb" id="10090-ENSMUSP00000020450"/>
<dbReference type="ProteomicsDB" id="256905"/>
<dbReference type="ProteomicsDB" id="342972"/>
<dbReference type="Antibodypedia" id="11228">
    <property type="antibodies" value="100 antibodies from 23 providers"/>
</dbReference>
<dbReference type="DNASU" id="64452"/>
<dbReference type="Ensembl" id="ENSMUST00000020450.4">
    <property type="protein sequence ID" value="ENSMUSP00000020450.4"/>
    <property type="gene ID" value="ENSMUSG00000020229.5"/>
</dbReference>
<dbReference type="GeneID" id="64452"/>
<dbReference type="KEGG" id="mmu:64452"/>
<dbReference type="AGR" id="MGI:1927848"/>
<dbReference type="CTD" id="64452"/>
<dbReference type="MGI" id="MGI:1927848">
    <property type="gene designation" value="Slc5a4a"/>
</dbReference>
<dbReference type="VEuPathDB" id="HostDB:ENSMUSG00000020229"/>
<dbReference type="eggNOG" id="KOG2349">
    <property type="taxonomic scope" value="Eukaryota"/>
</dbReference>
<dbReference type="GeneTree" id="ENSGT00940000160846"/>
<dbReference type="HOGENOM" id="CLU_018808_9_2_1"/>
<dbReference type="InParanoid" id="Q9ET37"/>
<dbReference type="OMA" id="CVKHCGI"/>
<dbReference type="OrthoDB" id="6132759at2759"/>
<dbReference type="PhylomeDB" id="Q9ET37"/>
<dbReference type="TreeFam" id="TF352855"/>
<dbReference type="Reactome" id="R-MMU-189200">
    <property type="pathway name" value="Cellular hexose transport"/>
</dbReference>
<dbReference type="BioGRID-ORCS" id="64452">
    <property type="hits" value="2 hits in 76 CRISPR screens"/>
</dbReference>
<dbReference type="PRO" id="PR:Q9ET37"/>
<dbReference type="Proteomes" id="UP000000589">
    <property type="component" value="Chromosome 10"/>
</dbReference>
<dbReference type="RNAct" id="Q9ET37">
    <property type="molecule type" value="protein"/>
</dbReference>
<dbReference type="Bgee" id="ENSMUSG00000020229">
    <property type="expression patterns" value="Expressed in small intestine Peyer's patch and 12 other cell types or tissues"/>
</dbReference>
<dbReference type="GO" id="GO:0016020">
    <property type="term" value="C:membrane"/>
    <property type="evidence" value="ECO:0000305"/>
    <property type="project" value="MGI"/>
</dbReference>
<dbReference type="GO" id="GO:0005886">
    <property type="term" value="C:plasma membrane"/>
    <property type="evidence" value="ECO:0007669"/>
    <property type="project" value="UniProtKB-SubCell"/>
</dbReference>
<dbReference type="GO" id="GO:0005412">
    <property type="term" value="F:D-glucose:sodium symporter activity"/>
    <property type="evidence" value="ECO:0000314"/>
    <property type="project" value="UniProtKB"/>
</dbReference>
<dbReference type="GO" id="GO:0015078">
    <property type="term" value="F:proton transmembrane transporter activity"/>
    <property type="evidence" value="ECO:0000314"/>
    <property type="project" value="MGI"/>
</dbReference>
<dbReference type="GO" id="GO:1902600">
    <property type="term" value="P:proton transmembrane transport"/>
    <property type="evidence" value="ECO:0000314"/>
    <property type="project" value="MGI"/>
</dbReference>
<dbReference type="FunFam" id="1.20.1730.10:FF:000005">
    <property type="entry name" value="sodium/glucose cotransporter 1 isoform X1"/>
    <property type="match status" value="1"/>
</dbReference>
<dbReference type="Gene3D" id="1.20.1730.10">
    <property type="entry name" value="Sodium/glucose cotransporter"/>
    <property type="match status" value="1"/>
</dbReference>
<dbReference type="InterPro" id="IPR038377">
    <property type="entry name" value="Na/Glc_symporter_sf"/>
</dbReference>
<dbReference type="InterPro" id="IPR001734">
    <property type="entry name" value="Na/solute_symporter"/>
</dbReference>
<dbReference type="InterPro" id="IPR018212">
    <property type="entry name" value="Na/solute_symporter_CS"/>
</dbReference>
<dbReference type="NCBIfam" id="TIGR00813">
    <property type="entry name" value="sss"/>
    <property type="match status" value="1"/>
</dbReference>
<dbReference type="PANTHER" id="PTHR11819:SF112">
    <property type="entry name" value="GLUCOSE SENSOR PROTEIN SLC5A4-RELATED"/>
    <property type="match status" value="1"/>
</dbReference>
<dbReference type="PANTHER" id="PTHR11819">
    <property type="entry name" value="SOLUTE CARRIER FAMILY 5"/>
    <property type="match status" value="1"/>
</dbReference>
<dbReference type="Pfam" id="PF00474">
    <property type="entry name" value="SSF"/>
    <property type="match status" value="1"/>
</dbReference>
<dbReference type="PROSITE" id="PS00457">
    <property type="entry name" value="NA_SOLUT_SYMP_2"/>
    <property type="match status" value="1"/>
</dbReference>
<dbReference type="PROSITE" id="PS50283">
    <property type="entry name" value="NA_SOLUT_SYMP_3"/>
    <property type="match status" value="1"/>
</dbReference>
<name>S5A4A_MOUSE</name>
<feature type="chain" id="PRO_0000105377" description="Solute carrier family 5 member 4A">
    <location>
        <begin position="1"/>
        <end position="656"/>
    </location>
</feature>
<feature type="topological domain" description="Cytoplasmic" evidence="1">
    <location>
        <begin position="1"/>
        <end position="28"/>
    </location>
</feature>
<feature type="transmembrane region" description="Helical" evidence="1">
    <location>
        <begin position="29"/>
        <end position="47"/>
    </location>
</feature>
<feature type="topological domain" description="Extracellular" evidence="1">
    <location>
        <begin position="48"/>
        <end position="64"/>
    </location>
</feature>
<feature type="transmembrane region" description="Helical" evidence="1">
    <location>
        <begin position="65"/>
        <end position="85"/>
    </location>
</feature>
<feature type="topological domain" description="Cytoplasmic" evidence="1">
    <location>
        <begin position="86"/>
        <end position="105"/>
    </location>
</feature>
<feature type="transmembrane region" description="Helical" evidence="1">
    <location>
        <begin position="106"/>
        <end position="126"/>
    </location>
</feature>
<feature type="topological domain" description="Extracellular" evidence="1">
    <location>
        <begin position="127"/>
        <end position="171"/>
    </location>
</feature>
<feature type="transmembrane region" description="Helical" evidence="1">
    <location>
        <begin position="172"/>
        <end position="191"/>
    </location>
</feature>
<feature type="topological domain" description="Cytoplasmic" evidence="1">
    <location>
        <begin position="192"/>
        <end position="208"/>
    </location>
</feature>
<feature type="transmembrane region" description="Helical" evidence="1">
    <location>
        <begin position="209"/>
        <end position="229"/>
    </location>
</feature>
<feature type="topological domain" description="Extracellular" evidence="1">
    <location>
        <begin position="230"/>
        <end position="270"/>
    </location>
</feature>
<feature type="transmembrane region" description="Helical" evidence="1">
    <location>
        <begin position="271"/>
        <end position="291"/>
    </location>
</feature>
<feature type="topological domain" description="Cytoplasmic" evidence="1">
    <location>
        <begin position="292"/>
        <end position="314"/>
    </location>
</feature>
<feature type="transmembrane region" description="Helical" evidence="1">
    <location>
        <begin position="315"/>
        <end position="334"/>
    </location>
</feature>
<feature type="topological domain" description="Extracellular" evidence="1">
    <location>
        <begin position="335"/>
        <end position="423"/>
    </location>
</feature>
<feature type="transmembrane region" description="Helical" evidence="1">
    <location>
        <begin position="424"/>
        <end position="443"/>
    </location>
</feature>
<feature type="topological domain" description="Cytoplasmic" evidence="1">
    <location>
        <begin position="444"/>
        <end position="455"/>
    </location>
</feature>
<feature type="transmembrane region" description="Helical" evidence="1">
    <location>
        <begin position="456"/>
        <end position="476"/>
    </location>
</feature>
<feature type="topological domain" description="Extracellular" evidence="1">
    <location>
        <begin position="477"/>
        <end position="526"/>
    </location>
</feature>
<feature type="transmembrane region" description="Helical" evidence="1">
    <location>
        <begin position="527"/>
        <end position="547"/>
    </location>
</feature>
<feature type="topological domain" description="Cytoplasmic" evidence="1">
    <location>
        <begin position="548"/>
        <end position="634"/>
    </location>
</feature>
<feature type="transmembrane region" description="Helical" evidence="1">
    <location>
        <begin position="635"/>
        <end position="655"/>
    </location>
</feature>
<feature type="region of interest" description="Disordered" evidence="2">
    <location>
        <begin position="574"/>
        <end position="593"/>
    </location>
</feature>
<feature type="glycosylation site" description="N-linked (GlcNAc...) asparagine" evidence="1">
    <location>
        <position position="248"/>
    </location>
</feature>
<feature type="mutagenesis site" description="Confers sodium-dependent sugar transport activity not found in the wild type protein." evidence="4">
    <original>E</original>
    <variation>Q</variation>
    <location>
        <position position="457"/>
    </location>
</feature>
<feature type="sequence conflict" description="In Ref. 1; AAG01741." evidence="7" ref="1">
    <original>M</original>
    <variation>P</variation>
    <location>
        <position position="376"/>
    </location>
</feature>
<accession>Q9ET37</accession>
<accession>G5E836</accession>
<accession>Q8R479</accession>